<organism>
    <name type="scientific">Bos taurus</name>
    <name type="common">Bovine</name>
    <dbReference type="NCBI Taxonomy" id="9913"/>
    <lineage>
        <taxon>Eukaryota</taxon>
        <taxon>Metazoa</taxon>
        <taxon>Chordata</taxon>
        <taxon>Craniata</taxon>
        <taxon>Vertebrata</taxon>
        <taxon>Euteleostomi</taxon>
        <taxon>Mammalia</taxon>
        <taxon>Eutheria</taxon>
        <taxon>Laurasiatheria</taxon>
        <taxon>Artiodactyla</taxon>
        <taxon>Ruminantia</taxon>
        <taxon>Pecora</taxon>
        <taxon>Bovidae</taxon>
        <taxon>Bovinae</taxon>
        <taxon>Bos</taxon>
    </lineage>
</organism>
<reference key="1">
    <citation type="submission" date="2006-08" db="EMBL/GenBank/DDBJ databases">
        <authorList>
            <consortium name="NIH - Mammalian Gene Collection (MGC) project"/>
        </authorList>
    </citation>
    <scope>NUCLEOTIDE SEQUENCE [LARGE SCALE MRNA]</scope>
    <source>
        <strain>Hereford</strain>
        <tissue>Fetal pons</tissue>
    </source>
</reference>
<reference key="2">
    <citation type="journal article" date="1992" name="Proc. Natl. Acad. Sci. U.S.A.">
        <title>Cellular regulation of the iron-responsive element binding protein: disassembly of the cubane iron-sulfur cluster results in high-affinity RNA binding.</title>
        <authorList>
            <person name="Haile D.J."/>
            <person name="Rouault T.A."/>
            <person name="Harford J.B."/>
            <person name="Kennedy M.C."/>
            <person name="Blondin G.A."/>
            <person name="Beinert H."/>
            <person name="Klausner R.D."/>
        </authorList>
    </citation>
    <scope>FUNCTION</scope>
    <scope>SUBCELLULAR LOCATION</scope>
</reference>
<evidence type="ECO:0000250" key="1"/>
<evidence type="ECO:0000250" key="2">
    <source>
        <dbReference type="UniProtKB" id="P21399"/>
    </source>
</evidence>
<evidence type="ECO:0000269" key="3">
    <source>
    </source>
</evidence>
<evidence type="ECO:0000305" key="4"/>
<accession>Q0VCU1</accession>
<name>ACOHC_BOVIN</name>
<sequence>MSNPFAHLVEPLDPAQPGKKFFNLNKLEDSRYGSLPFSIRVLLEAAIRNCDQFLVKKNDVENILNWKVMQHKNIEVPFKPARVILQDFTGVPAVVDFAAMRDAVKKLGGNPEKINPICPADLVIDHSIQVDFNRRADSLKKNQDLEFERNKERFEFLKWGSQAFHNMRIIPPGSGIIHQVNLEYLARVVFDQDGYYYPDSLVGTDSHTTMIDGLGVLGWGVGGIEAEAVMLGQPISMVLPQVIGYRLVGNPHPLVTSTDIVLTITKHLRQVGVVGKFVEFFGPGVAQLSIADRATIANMCPEYGATAAFFPVDEVSIKYLVQTGRDKEKVKHIKQYLQAVGMFRDFSDSSQDPDFAQVVELDLKTVVPCCSGPKRPQDKVAVSDMKKDFESCLGAKQGFKGFQVAPDHHNDHKTFIYNNSKFTLAHGSVVIAAITSCTNTSNPSVMLGAGLLAKKAVDAGLSVKPYIKTSLSPGSGVVTYYLRESGVMPYLSQLGFDVVGYGCMTCIGNSGPLPEAVVEAIVQGDLVAVGVLSGNRNFEGRVHPNTRANYLASPPLVIAYAIAGTIRIDFEKEPLGVNAKGQQVFLKDIWPTRDEIQAVERQYVIPGMFKEVYQKIETVNESWNALAAPSDKLYCWNPKSTYIKSPPFFEDLTLDLQPPKSIVDAYVLLNLGDSVTTDHISPAGNIARNSPAARYLTNRGLTPREFNSYGSRRGNDAIMARGTFANIRLLNKFLNKQAPQTIHLPSGEILDVFDAAERYQQAGLPLIVLAGKEYGSGSSRDWAAKGPFLLGIRAVLAESYERIHRSNLVGMGVIPLEYLPGENADTLGLTGRERYTISIPETLKPRMKVQIKLDTGKTFQAVMRFDTDVELTYFHNGGILNYMIRKMTK</sequence>
<proteinExistence type="evidence at transcript level"/>
<feature type="chain" id="PRO_0000285207" description="Cytoplasmic aconitate hydratase">
    <location>
        <begin position="1"/>
        <end position="889"/>
    </location>
</feature>
<feature type="binding site" evidence="1">
    <location>
        <position position="86"/>
    </location>
    <ligand>
        <name>substrate</name>
    </ligand>
</feature>
<feature type="binding site" evidence="1">
    <location>
        <begin position="205"/>
        <end position="207"/>
    </location>
    <ligand>
        <name>substrate</name>
    </ligand>
</feature>
<feature type="binding site" evidence="1">
    <location>
        <position position="437"/>
    </location>
    <ligand>
        <name>[4Fe-4S] cluster</name>
        <dbReference type="ChEBI" id="CHEBI:49883"/>
    </ligand>
</feature>
<feature type="binding site" evidence="1">
    <location>
        <position position="503"/>
    </location>
    <ligand>
        <name>[4Fe-4S] cluster</name>
        <dbReference type="ChEBI" id="CHEBI:49883"/>
    </ligand>
</feature>
<feature type="binding site" evidence="1">
    <location>
        <position position="506"/>
    </location>
    <ligand>
        <name>[4Fe-4S] cluster</name>
        <dbReference type="ChEBI" id="CHEBI:49883"/>
    </ligand>
</feature>
<feature type="binding site" evidence="1">
    <location>
        <position position="536"/>
    </location>
    <ligand>
        <name>substrate</name>
    </ligand>
</feature>
<feature type="binding site" evidence="1">
    <location>
        <position position="541"/>
    </location>
    <ligand>
        <name>substrate</name>
    </ligand>
</feature>
<feature type="binding site" evidence="1">
    <location>
        <position position="699"/>
    </location>
    <ligand>
        <name>substrate</name>
    </ligand>
</feature>
<feature type="binding site" evidence="1">
    <location>
        <begin position="779"/>
        <end position="780"/>
    </location>
    <ligand>
        <name>substrate</name>
    </ligand>
</feature>
<gene>
    <name type="primary">ACO1</name>
</gene>
<comment type="function">
    <text evidence="3">Bifunctional iron sensor that switches between 2 activities depending on iron availability. Iron deprivation, promotes its mRNA binding activity through which it regulates the expression of genes involved in iron uptake, sequestration and utilization. Binds to iron-responsive elements (IRES) in the untranslated region of target mRNAs preventing for instance the translation of ferritin and aminolevulinic acid synthase and stabilizing the transferrin receptor mRNA.</text>
</comment>
<comment type="function">
    <text evidence="2">Conversely, when cellular iron levels are high, binds a 4Fe-4S cluster which precludes RNA binding activity and promotes the aconitase activity, the isomerization of citrate to isocitrate via cis-aconitate.</text>
</comment>
<comment type="catalytic activity">
    <reaction evidence="2">
        <text>citrate = D-threo-isocitrate</text>
        <dbReference type="Rhea" id="RHEA:10336"/>
        <dbReference type="ChEBI" id="CHEBI:15562"/>
        <dbReference type="ChEBI" id="CHEBI:16947"/>
        <dbReference type="EC" id="4.2.1.3"/>
    </reaction>
</comment>
<comment type="cofactor">
    <cofactor evidence="2">
        <name>[4Fe-4S] cluster</name>
        <dbReference type="ChEBI" id="CHEBI:49883"/>
    </cofactor>
    <text evidence="2">Binds 1 [4Fe-4S] cluster per subunit.</text>
</comment>
<comment type="subunit">
    <text evidence="2">Interacts (when associated with the 4Fe-4S) with FBXL5. Interacts with frataxin(81-210).</text>
</comment>
<comment type="subcellular location">
    <subcellularLocation>
        <location evidence="3">Cytoplasm</location>
        <location evidence="3">Cytosol</location>
    </subcellularLocation>
</comment>
<comment type="similarity">
    <text evidence="4">Belongs to the aconitase/IPM isomerase family.</text>
</comment>
<protein>
    <recommendedName>
        <fullName evidence="4">Cytoplasmic aconitate hydratase</fullName>
        <shortName>Aconitase</shortName>
        <ecNumber evidence="2">4.2.1.3</ecNumber>
    </recommendedName>
    <alternativeName>
        <fullName>Citrate hydro-lyase</fullName>
    </alternativeName>
    <alternativeName>
        <fullName>Iron-responsive element-binding protein 1</fullName>
        <shortName>IRE-BP 1</shortName>
    </alternativeName>
</protein>
<keyword id="KW-0004">4Fe-4S</keyword>
<keyword id="KW-0963">Cytoplasm</keyword>
<keyword id="KW-0408">Iron</keyword>
<keyword id="KW-0411">Iron-sulfur</keyword>
<keyword id="KW-0456">Lyase</keyword>
<keyword id="KW-0479">Metal-binding</keyword>
<keyword id="KW-1185">Reference proteome</keyword>
<keyword id="KW-0694">RNA-binding</keyword>
<keyword id="KW-0816">Tricarboxylic acid cycle</keyword>
<dbReference type="EC" id="4.2.1.3" evidence="2"/>
<dbReference type="EMBL" id="BC120006">
    <property type="protein sequence ID" value="AAI20007.1"/>
    <property type="molecule type" value="mRNA"/>
</dbReference>
<dbReference type="RefSeq" id="NP_001069059.1">
    <property type="nucleotide sequence ID" value="NM_001075591.1"/>
</dbReference>
<dbReference type="SMR" id="Q0VCU1"/>
<dbReference type="FunCoup" id="Q0VCU1">
    <property type="interactions" value="1383"/>
</dbReference>
<dbReference type="STRING" id="9913.ENSBTAP00000070636"/>
<dbReference type="MoonProt" id="Q0VCU1"/>
<dbReference type="PaxDb" id="9913-ENSBTAP00000000731"/>
<dbReference type="PeptideAtlas" id="Q0VCU1"/>
<dbReference type="GeneID" id="512995"/>
<dbReference type="KEGG" id="bta:512995"/>
<dbReference type="CTD" id="48"/>
<dbReference type="eggNOG" id="KOG0452">
    <property type="taxonomic scope" value="Eukaryota"/>
</dbReference>
<dbReference type="InParanoid" id="Q0VCU1"/>
<dbReference type="OrthoDB" id="2279155at2759"/>
<dbReference type="Proteomes" id="UP000009136">
    <property type="component" value="Unplaced"/>
</dbReference>
<dbReference type="GO" id="GO:0005737">
    <property type="term" value="C:cytoplasm"/>
    <property type="evidence" value="ECO:0000314"/>
    <property type="project" value="CAFA"/>
</dbReference>
<dbReference type="GO" id="GO:0005829">
    <property type="term" value="C:cytosol"/>
    <property type="evidence" value="ECO:0000314"/>
    <property type="project" value="UniProtKB"/>
</dbReference>
<dbReference type="GO" id="GO:0005739">
    <property type="term" value="C:mitochondrion"/>
    <property type="evidence" value="ECO:0000318"/>
    <property type="project" value="GO_Central"/>
</dbReference>
<dbReference type="GO" id="GO:0051538">
    <property type="term" value="F:3 iron, 4 sulfur cluster binding"/>
    <property type="evidence" value="ECO:0000314"/>
    <property type="project" value="CAFA"/>
</dbReference>
<dbReference type="GO" id="GO:0051539">
    <property type="term" value="F:4 iron, 4 sulfur cluster binding"/>
    <property type="evidence" value="ECO:0000314"/>
    <property type="project" value="CAFA"/>
</dbReference>
<dbReference type="GO" id="GO:0003994">
    <property type="term" value="F:aconitate hydratase activity"/>
    <property type="evidence" value="ECO:0000314"/>
    <property type="project" value="CAFA"/>
</dbReference>
<dbReference type="GO" id="GO:0008198">
    <property type="term" value="F:ferrous iron binding"/>
    <property type="evidence" value="ECO:0000314"/>
    <property type="project" value="CAFA"/>
</dbReference>
<dbReference type="GO" id="GO:0030350">
    <property type="term" value="F:iron-responsive element binding"/>
    <property type="evidence" value="ECO:0000314"/>
    <property type="project" value="CAFA"/>
</dbReference>
<dbReference type="GO" id="GO:0006101">
    <property type="term" value="P:citrate metabolic process"/>
    <property type="evidence" value="ECO:0000314"/>
    <property type="project" value="CAFA"/>
</dbReference>
<dbReference type="GO" id="GO:0006879">
    <property type="term" value="P:intracellular iron ion homeostasis"/>
    <property type="evidence" value="ECO:0000318"/>
    <property type="project" value="GO_Central"/>
</dbReference>
<dbReference type="GO" id="GO:0010040">
    <property type="term" value="P:response to iron(II) ion"/>
    <property type="evidence" value="ECO:0000250"/>
    <property type="project" value="UniProtKB"/>
</dbReference>
<dbReference type="GO" id="GO:0006099">
    <property type="term" value="P:tricarboxylic acid cycle"/>
    <property type="evidence" value="ECO:0007669"/>
    <property type="project" value="UniProtKB-KW"/>
</dbReference>
<dbReference type="CDD" id="cd01586">
    <property type="entry name" value="AcnA_IRP"/>
    <property type="match status" value="1"/>
</dbReference>
<dbReference type="CDD" id="cd01580">
    <property type="entry name" value="AcnA_IRP_Swivel"/>
    <property type="match status" value="1"/>
</dbReference>
<dbReference type="FunFam" id="3.30.499.10:FF:000002">
    <property type="entry name" value="Aconitate hydratase"/>
    <property type="match status" value="1"/>
</dbReference>
<dbReference type="FunFam" id="3.30.499.10:FF:000005">
    <property type="entry name" value="cytoplasmic aconitate hydratase"/>
    <property type="match status" value="1"/>
</dbReference>
<dbReference type="FunFam" id="3.20.19.10:FF:000005">
    <property type="entry name" value="Iron-responsive element-binding protein 2"/>
    <property type="match status" value="1"/>
</dbReference>
<dbReference type="Gene3D" id="6.10.190.10">
    <property type="match status" value="1"/>
</dbReference>
<dbReference type="Gene3D" id="3.30.499.10">
    <property type="entry name" value="Aconitase, domain 3"/>
    <property type="match status" value="2"/>
</dbReference>
<dbReference type="Gene3D" id="3.20.19.10">
    <property type="entry name" value="Aconitase, domain 4"/>
    <property type="match status" value="1"/>
</dbReference>
<dbReference type="InterPro" id="IPR044137">
    <property type="entry name" value="AcnA_IRP_Swivel"/>
</dbReference>
<dbReference type="InterPro" id="IPR015931">
    <property type="entry name" value="Acnase/IPM_dHydase_lsu_aba_1/3"/>
</dbReference>
<dbReference type="InterPro" id="IPR001030">
    <property type="entry name" value="Acoase/IPM_deHydtase_lsu_aba"/>
</dbReference>
<dbReference type="InterPro" id="IPR015928">
    <property type="entry name" value="Aconitase/3IPM_dehydase_swvl"/>
</dbReference>
<dbReference type="InterPro" id="IPR006249">
    <property type="entry name" value="Aconitase/IRP2"/>
</dbReference>
<dbReference type="InterPro" id="IPR018136">
    <property type="entry name" value="Aconitase_4Fe-4S_BS"/>
</dbReference>
<dbReference type="InterPro" id="IPR036008">
    <property type="entry name" value="Aconitase_4Fe-4S_dom"/>
</dbReference>
<dbReference type="InterPro" id="IPR000573">
    <property type="entry name" value="AconitaseA/IPMdHydase_ssu_swvl"/>
</dbReference>
<dbReference type="NCBIfam" id="TIGR01341">
    <property type="entry name" value="aconitase_1"/>
    <property type="match status" value="1"/>
</dbReference>
<dbReference type="NCBIfam" id="NF006757">
    <property type="entry name" value="PRK09277.1"/>
    <property type="match status" value="1"/>
</dbReference>
<dbReference type="NCBIfam" id="NF009520">
    <property type="entry name" value="PRK12881.1"/>
    <property type="match status" value="1"/>
</dbReference>
<dbReference type="PANTHER" id="PTHR11670">
    <property type="entry name" value="ACONITASE/IRON-RESPONSIVE ELEMENT FAMILY MEMBER"/>
    <property type="match status" value="1"/>
</dbReference>
<dbReference type="Pfam" id="PF00330">
    <property type="entry name" value="Aconitase"/>
    <property type="match status" value="1"/>
</dbReference>
<dbReference type="Pfam" id="PF00694">
    <property type="entry name" value="Aconitase_C"/>
    <property type="match status" value="1"/>
</dbReference>
<dbReference type="PRINTS" id="PR00415">
    <property type="entry name" value="ACONITASE"/>
</dbReference>
<dbReference type="SUPFAM" id="SSF53732">
    <property type="entry name" value="Aconitase iron-sulfur domain"/>
    <property type="match status" value="1"/>
</dbReference>
<dbReference type="SUPFAM" id="SSF52016">
    <property type="entry name" value="LeuD/IlvD-like"/>
    <property type="match status" value="1"/>
</dbReference>
<dbReference type="PROSITE" id="PS00450">
    <property type="entry name" value="ACONITASE_1"/>
    <property type="match status" value="1"/>
</dbReference>
<dbReference type="PROSITE" id="PS01244">
    <property type="entry name" value="ACONITASE_2"/>
    <property type="match status" value="1"/>
</dbReference>